<comment type="function">
    <text evidence="1">Binds to the sigma-S subunit of RNA polymerase, activating expression of sigma-S-regulated genes. Stimulates RNA polymerase holoenzyme formation and may bind to several other sigma factors, such as sigma-70 and sigma-32.</text>
</comment>
<comment type="subcellular location">
    <subcellularLocation>
        <location evidence="1">Cytoplasm</location>
    </subcellularLocation>
</comment>
<comment type="similarity">
    <text evidence="1">Belongs to the Crl family.</text>
</comment>
<dbReference type="EMBL" id="AM933173">
    <property type="protein sequence ID" value="CAR36232.1"/>
    <property type="molecule type" value="Genomic_DNA"/>
</dbReference>
<dbReference type="RefSeq" id="WP_000174693.1">
    <property type="nucleotide sequence ID" value="NC_011274.1"/>
</dbReference>
<dbReference type="SMR" id="B5R5R6"/>
<dbReference type="KEGG" id="seg:SG0330"/>
<dbReference type="HOGENOM" id="CLU_136773_0_0_6"/>
<dbReference type="Proteomes" id="UP000008321">
    <property type="component" value="Chromosome"/>
</dbReference>
<dbReference type="GO" id="GO:0005737">
    <property type="term" value="C:cytoplasm"/>
    <property type="evidence" value="ECO:0007669"/>
    <property type="project" value="UniProtKB-SubCell"/>
</dbReference>
<dbReference type="GO" id="GO:0045893">
    <property type="term" value="P:positive regulation of DNA-templated transcription"/>
    <property type="evidence" value="ECO:0007669"/>
    <property type="project" value="UniProtKB-UniRule"/>
</dbReference>
<dbReference type="Gene3D" id="3.30.310.230">
    <property type="entry name" value="Sigma factor-binding protein Crl monomer"/>
    <property type="match status" value="1"/>
</dbReference>
<dbReference type="HAMAP" id="MF_01178">
    <property type="entry name" value="Crl"/>
    <property type="match status" value="1"/>
</dbReference>
<dbReference type="InterPro" id="IPR009986">
    <property type="entry name" value="Tscrpt_reg_Crl"/>
</dbReference>
<dbReference type="InterPro" id="IPR038208">
    <property type="entry name" value="Tscrpt_reg_Crl_sf"/>
</dbReference>
<dbReference type="NCBIfam" id="NF008217">
    <property type="entry name" value="PRK10984.1"/>
    <property type="match status" value="1"/>
</dbReference>
<dbReference type="Pfam" id="PF07417">
    <property type="entry name" value="Crl"/>
    <property type="match status" value="1"/>
</dbReference>
<name>CRL_SALG2</name>
<organism>
    <name type="scientific">Salmonella gallinarum (strain 287/91 / NCTC 13346)</name>
    <dbReference type="NCBI Taxonomy" id="550538"/>
    <lineage>
        <taxon>Bacteria</taxon>
        <taxon>Pseudomonadati</taxon>
        <taxon>Pseudomonadota</taxon>
        <taxon>Gammaproteobacteria</taxon>
        <taxon>Enterobacterales</taxon>
        <taxon>Enterobacteriaceae</taxon>
        <taxon>Salmonella</taxon>
    </lineage>
</organism>
<evidence type="ECO:0000255" key="1">
    <source>
        <dbReference type="HAMAP-Rule" id="MF_01178"/>
    </source>
</evidence>
<reference key="1">
    <citation type="journal article" date="2008" name="Genome Res.">
        <title>Comparative genome analysis of Salmonella enteritidis PT4 and Salmonella gallinarum 287/91 provides insights into evolutionary and host adaptation pathways.</title>
        <authorList>
            <person name="Thomson N.R."/>
            <person name="Clayton D.J."/>
            <person name="Windhorst D."/>
            <person name="Vernikos G."/>
            <person name="Davidson S."/>
            <person name="Churcher C."/>
            <person name="Quail M.A."/>
            <person name="Stevens M."/>
            <person name="Jones M.A."/>
            <person name="Watson M."/>
            <person name="Barron A."/>
            <person name="Layton A."/>
            <person name="Pickard D."/>
            <person name="Kingsley R.A."/>
            <person name="Bignell A."/>
            <person name="Clark L."/>
            <person name="Harris B."/>
            <person name="Ormond D."/>
            <person name="Abdellah Z."/>
            <person name="Brooks K."/>
            <person name="Cherevach I."/>
            <person name="Chillingworth T."/>
            <person name="Woodward J."/>
            <person name="Norberczak H."/>
            <person name="Lord A."/>
            <person name="Arrowsmith C."/>
            <person name="Jagels K."/>
            <person name="Moule S."/>
            <person name="Mungall K."/>
            <person name="Saunders M."/>
            <person name="Whitehead S."/>
            <person name="Chabalgoity J.A."/>
            <person name="Maskell D."/>
            <person name="Humphreys T."/>
            <person name="Roberts M."/>
            <person name="Barrow P.A."/>
            <person name="Dougan G."/>
            <person name="Parkhill J."/>
        </authorList>
    </citation>
    <scope>NUCLEOTIDE SEQUENCE [LARGE SCALE GENOMIC DNA]</scope>
    <source>
        <strain>287/91 / NCTC 13346</strain>
    </source>
</reference>
<feature type="chain" id="PRO_1000138146" description="Sigma factor-binding protein Crl">
    <location>
        <begin position="1"/>
        <end position="133"/>
    </location>
</feature>
<feature type="region of interest" description="Essential for activity" evidence="1">
    <location>
        <begin position="99"/>
        <end position="122"/>
    </location>
</feature>
<feature type="coiled-coil region" evidence="1">
    <location>
        <begin position="90"/>
        <end position="111"/>
    </location>
</feature>
<proteinExistence type="inferred from homology"/>
<sequence>MTLPSGHPKSRLIKKFTALGPYIREGQCEDNRFFFDCLAVCVNVKPAPEKREFWGWWMELEAQEKRFTYRYQFGLFDKEGNWTAVPINETEVVERLEYTLREFHEKLRDLLISMELALEPSDDFNDEPVKLSA</sequence>
<gene>
    <name evidence="1" type="primary">crl</name>
    <name type="ordered locus">SG0330</name>
</gene>
<protein>
    <recommendedName>
        <fullName evidence="1">Sigma factor-binding protein Crl</fullName>
    </recommendedName>
</protein>
<keyword id="KW-0010">Activator</keyword>
<keyword id="KW-0175">Coiled coil</keyword>
<keyword id="KW-0963">Cytoplasm</keyword>
<keyword id="KW-0804">Transcription</keyword>
<keyword id="KW-0805">Transcription regulation</keyword>
<accession>B5R5R6</accession>